<feature type="chain" id="PRO_0000085287" description="Protein Rev">
    <location>
        <begin position="1"/>
        <end position="168"/>
    </location>
</feature>
<feature type="region of interest" description="Homomultimerization" evidence="1">
    <location>
        <begin position="16"/>
        <end position="24"/>
    </location>
</feature>
<feature type="region of interest" description="Disordered" evidence="2">
    <location>
        <begin position="108"/>
        <end position="168"/>
    </location>
</feature>
<feature type="short sequence motif" description="Nuclear localization signal and RNA-binding (RRE)" evidence="1">
    <location>
        <begin position="35"/>
        <end position="49"/>
    </location>
</feature>
<feature type="short sequence motif" description="Nuclear export signal and binding to XPO1" evidence="1">
    <location>
        <begin position="71"/>
        <end position="82"/>
    </location>
</feature>
<feature type="compositionally biased region" description="Basic and acidic residues" evidence="2">
    <location>
        <begin position="117"/>
        <end position="129"/>
    </location>
</feature>
<feature type="compositionally biased region" description="Basic and acidic residues" evidence="2">
    <location>
        <begin position="158"/>
        <end position="168"/>
    </location>
</feature>
<keyword id="KW-0014">AIDS</keyword>
<keyword id="KW-1035">Host cytoplasm</keyword>
<keyword id="KW-1048">Host nucleus</keyword>
<keyword id="KW-0509">mRNA transport</keyword>
<keyword id="KW-0694">RNA-binding</keyword>
<keyword id="KW-0813">Transport</keyword>
<dbReference type="EMBL" id="J04498">
    <property type="protein sequence ID" value="AAB00751.1"/>
    <property type="molecule type" value="Genomic_DNA"/>
</dbReference>
<dbReference type="SMR" id="P12448"/>
<dbReference type="Proteomes" id="UP000007427">
    <property type="component" value="Segment"/>
</dbReference>
<dbReference type="GO" id="GO:0030430">
    <property type="term" value="C:host cell cytoplasm"/>
    <property type="evidence" value="ECO:0007669"/>
    <property type="project" value="UniProtKB-SubCell"/>
</dbReference>
<dbReference type="GO" id="GO:0044196">
    <property type="term" value="C:host cell nucleolus"/>
    <property type="evidence" value="ECO:0007669"/>
    <property type="project" value="UniProtKB-SubCell"/>
</dbReference>
<dbReference type="GO" id="GO:0003700">
    <property type="term" value="F:DNA-binding transcription factor activity"/>
    <property type="evidence" value="ECO:0007669"/>
    <property type="project" value="InterPro"/>
</dbReference>
<dbReference type="GO" id="GO:0003723">
    <property type="term" value="F:RNA binding"/>
    <property type="evidence" value="ECO:0007669"/>
    <property type="project" value="UniProtKB-KW"/>
</dbReference>
<dbReference type="GO" id="GO:0051028">
    <property type="term" value="P:mRNA transport"/>
    <property type="evidence" value="ECO:0007669"/>
    <property type="project" value="UniProtKB-KW"/>
</dbReference>
<dbReference type="Gene3D" id="6.10.140.630">
    <property type="match status" value="1"/>
</dbReference>
<dbReference type="InterPro" id="IPR000625">
    <property type="entry name" value="REV_protein"/>
</dbReference>
<dbReference type="Pfam" id="PF00424">
    <property type="entry name" value="REV"/>
    <property type="match status" value="1"/>
</dbReference>
<organism>
    <name type="scientific">Human immunodeficiency virus type 2 subtype A (isolate SBLISY)</name>
    <name type="common">HIV-2</name>
    <dbReference type="NCBI Taxonomy" id="11718"/>
    <lineage>
        <taxon>Viruses</taxon>
        <taxon>Riboviria</taxon>
        <taxon>Pararnavirae</taxon>
        <taxon>Artverviricota</taxon>
        <taxon>Revtraviricetes</taxon>
        <taxon>Ortervirales</taxon>
        <taxon>Retroviridae</taxon>
        <taxon>Orthoretrovirinae</taxon>
        <taxon>Lentivirus</taxon>
        <taxon>Human immunodeficiency virus 2</taxon>
    </lineage>
</organism>
<organismHost>
    <name type="scientific">Homo sapiens</name>
    <name type="common">Human</name>
    <dbReference type="NCBI Taxonomy" id="9606"/>
</organismHost>
<gene>
    <name type="primary">rev</name>
</gene>
<name>REV_HV2SB</name>
<protein>
    <recommendedName>
        <fullName>Protein Rev</fullName>
    </recommendedName>
    <alternativeName>
        <fullName>Regulator of expression of viral proteins</fullName>
    </alternativeName>
</protein>
<reference key="1">
    <citation type="journal article" date="1989" name="Proc. Natl. Acad. Sci. U.S.A.">
        <title>Molecular and biological characterization of a replication competent human immunodeficiency type 2 (HIV-2) proviral clone.</title>
        <authorList>
            <person name="Franchini G."/>
            <person name="Fargnoli K.A."/>
            <person name="Giombini F."/>
            <person name="Jagodzinski L.L."/>
            <person name="de Rossi A."/>
            <person name="Bosch M."/>
            <person name="Biberfeld G."/>
            <person name="Fenyo A.M."/>
            <person name="Albert J."/>
            <person name="Gallo R.C."/>
            <person name="Wong-Staal F."/>
        </authorList>
    </citation>
    <scope>NUCLEOTIDE SEQUENCE [GENOMIC DNA]</scope>
</reference>
<comment type="function">
    <text evidence="1">Escorts unspliced or incompletely spliced viral pre-mRNAs (late transcripts) out of the nucleus of infected cells. These pre-mRNAs carry a recognition sequence called Rev responsive element (RRE) located in the env gene, that is not present in fully spliced viral mRNAs (early transcripts). This function is essential since most viral proteins are translated from unspliced or partially spliced pre-mRNAs which cannot exit the nucleus by the pathway used by fully processed cellular mRNAs (By similarity).</text>
</comment>
<comment type="subunit">
    <text evidence="1">Homomultimer; when bound to the RRE. Multimeric assembly is essential for activity (By similarity).</text>
</comment>
<comment type="subcellular location">
    <subcellularLocation>
        <location>Host nucleus</location>
        <location>Host nucleolus</location>
    </subcellularLocation>
    <subcellularLocation>
        <location>Host cytoplasm</location>
    </subcellularLocation>
    <text evidence="1">The presence of both nuclear import and nuclear export signals leads to continuous shuttling between the nucleus and cytoplasm.</text>
</comment>
<comment type="domain">
    <text evidence="1">The RNA-binding motif binds to the RRE, a stem-and-loop structure present in incompletely spliced viral pre-mRNAs. This region also contains the NLS which mediates nuclear localization. These overlapping functions prevent Rev bound to RRE from undesirable return to the nucleus. When Rev binds the RRE, the NLS becomes masked while the NES remains accessible (By similarity).</text>
</comment>
<evidence type="ECO:0000250" key="1"/>
<evidence type="ECO:0000256" key="2">
    <source>
        <dbReference type="SAM" id="MobiDB-lite"/>
    </source>
</evidence>
<sequence>MTERADEEGVRRKLRLIRLLHQTNPYPQGLGTARQRRNRRRRWERRWKQILALADRIYTFPDPPADPPLDQTIQQLQGLTIQTLPDPPTTQRLAETQGSLPAVWVRVDPRSVPGPREGYKRDSYERGEELVGGSGTNRKGDTRSSTKDQAGSRNCPPVRDRDISKETL</sequence>
<accession>P12448</accession>
<proteinExistence type="inferred from homology"/>